<evidence type="ECO:0000255" key="1">
    <source>
        <dbReference type="HAMAP-Rule" id="MF_01179"/>
    </source>
</evidence>
<organism>
    <name type="scientific">Escherichia coli O6:K15:H31 (strain 536 / UPEC)</name>
    <dbReference type="NCBI Taxonomy" id="362663"/>
    <lineage>
        <taxon>Bacteria</taxon>
        <taxon>Pseudomonadati</taxon>
        <taxon>Pseudomonadota</taxon>
        <taxon>Gammaproteobacteria</taxon>
        <taxon>Enterobacterales</taxon>
        <taxon>Enterobacteriaceae</taxon>
        <taxon>Escherichia</taxon>
    </lineage>
</organism>
<accession>Q0TJA2</accession>
<reference key="1">
    <citation type="journal article" date="2006" name="Mol. Microbiol.">
        <title>Role of pathogenicity island-associated integrases in the genome plasticity of uropathogenic Escherichia coli strain 536.</title>
        <authorList>
            <person name="Hochhut B."/>
            <person name="Wilde C."/>
            <person name="Balling G."/>
            <person name="Middendorf B."/>
            <person name="Dobrindt U."/>
            <person name="Brzuszkiewicz E."/>
            <person name="Gottschalk G."/>
            <person name="Carniel E."/>
            <person name="Hacker J."/>
        </authorList>
    </citation>
    <scope>NUCLEOTIDE SEQUENCE [LARGE SCALE GENOMIC DNA]</scope>
    <source>
        <strain>536 / UPEC</strain>
    </source>
</reference>
<proteinExistence type="inferred from homology"/>
<sequence>MYTSGYAHRSSSFSSAASKIARVSTENTTAGLISEVVYREDQPMMTQLLLLPLLQQLGQQSRWQLWLTPQQKLSREWVQASGLPLTKVMQISQLSPCHTVESMVRALRTGNYSVVIGWLADDLTAEEHAELVDAANEGNAMGFIMRPVSASSHATRQLSGLKIHSNLYH</sequence>
<name>SULA_ECOL5</name>
<comment type="function">
    <text evidence="1">Component of the SOS system and an inhibitor of cell division. Accumulation of SulA causes rapid cessation of cell division and the appearance of long, non-septate filaments. In the presence of GTP, binds a polymerization-competent form of FtsZ in a 1:1 ratio, thus inhibiting FtsZ polymerization and therefore preventing it from participating in the assembly of the Z ring. This mechanism prevents the premature segregation of damaged DNA to daughter cells during cell division.</text>
</comment>
<comment type="subunit">
    <text evidence="1">Interacts with FtsZ.</text>
</comment>
<comment type="induction">
    <text evidence="1">By DNA damage, as part of the SOS response.</text>
</comment>
<comment type="PTM">
    <text evidence="1">Is rapidly cleaved and degraded by the Lon protease once DNA damage is repaired.</text>
</comment>
<comment type="similarity">
    <text evidence="1">Belongs to the SulA family.</text>
</comment>
<dbReference type="EMBL" id="CP000247">
    <property type="protein sequence ID" value="ABG68977.1"/>
    <property type="molecule type" value="Genomic_DNA"/>
</dbReference>
<dbReference type="RefSeq" id="WP_000288707.1">
    <property type="nucleotide sequence ID" value="NC_008253.1"/>
</dbReference>
<dbReference type="SMR" id="Q0TJA2"/>
<dbReference type="KEGG" id="ecp:ECP_0964"/>
<dbReference type="HOGENOM" id="CLU_118972_1_0_6"/>
<dbReference type="Proteomes" id="UP000009182">
    <property type="component" value="Chromosome"/>
</dbReference>
<dbReference type="GO" id="GO:0000917">
    <property type="term" value="P:division septum assembly"/>
    <property type="evidence" value="ECO:0007669"/>
    <property type="project" value="UniProtKB-KW"/>
</dbReference>
<dbReference type="GO" id="GO:0006281">
    <property type="term" value="P:DNA repair"/>
    <property type="evidence" value="ECO:0007669"/>
    <property type="project" value="TreeGrafter"/>
</dbReference>
<dbReference type="GO" id="GO:0051782">
    <property type="term" value="P:negative regulation of cell division"/>
    <property type="evidence" value="ECO:0007669"/>
    <property type="project" value="UniProtKB-UniRule"/>
</dbReference>
<dbReference type="GO" id="GO:0009432">
    <property type="term" value="P:SOS response"/>
    <property type="evidence" value="ECO:0007669"/>
    <property type="project" value="UniProtKB-UniRule"/>
</dbReference>
<dbReference type="FunFam" id="3.40.50.300:FF:000417">
    <property type="entry name" value="Cell division inhibitor SulA"/>
    <property type="match status" value="1"/>
</dbReference>
<dbReference type="Gene3D" id="3.40.50.300">
    <property type="entry name" value="P-loop containing nucleotide triphosphate hydrolases"/>
    <property type="match status" value="1"/>
</dbReference>
<dbReference type="HAMAP" id="MF_01179">
    <property type="entry name" value="SulA"/>
    <property type="match status" value="1"/>
</dbReference>
<dbReference type="InterPro" id="IPR004596">
    <property type="entry name" value="Cell_div_suppressor_SulA"/>
</dbReference>
<dbReference type="InterPro" id="IPR027417">
    <property type="entry name" value="P-loop_NTPase"/>
</dbReference>
<dbReference type="InterPro" id="IPR050356">
    <property type="entry name" value="SulA_CellDiv_inhibitor"/>
</dbReference>
<dbReference type="InterPro" id="IPR047696">
    <property type="entry name" value="SulA_enterobact"/>
</dbReference>
<dbReference type="NCBIfam" id="NF007892">
    <property type="entry name" value="PRK10595.1"/>
    <property type="match status" value="1"/>
</dbReference>
<dbReference type="NCBIfam" id="TIGR00623">
    <property type="entry name" value="SOS_SulA_coli"/>
    <property type="match status" value="1"/>
</dbReference>
<dbReference type="PANTHER" id="PTHR35369">
    <property type="entry name" value="BLR3025 PROTEIN-RELATED"/>
    <property type="match status" value="1"/>
</dbReference>
<dbReference type="PANTHER" id="PTHR35369:SF4">
    <property type="entry name" value="CELL DIVISION INHIBITOR SULA"/>
    <property type="match status" value="1"/>
</dbReference>
<dbReference type="Pfam" id="PF03846">
    <property type="entry name" value="SulA"/>
    <property type="match status" value="1"/>
</dbReference>
<dbReference type="PIRSF" id="PIRSF003093">
    <property type="entry name" value="SulA"/>
    <property type="match status" value="1"/>
</dbReference>
<dbReference type="SUPFAM" id="SSF52540">
    <property type="entry name" value="P-loop containing nucleoside triphosphate hydrolases"/>
    <property type="match status" value="1"/>
</dbReference>
<gene>
    <name evidence="1" type="primary">sulA</name>
    <name type="ordered locus">ECP_0964</name>
</gene>
<keyword id="KW-0131">Cell cycle</keyword>
<keyword id="KW-0132">Cell division</keyword>
<keyword id="KW-0227">DNA damage</keyword>
<keyword id="KW-0717">Septation</keyword>
<keyword id="KW-0742">SOS response</keyword>
<protein>
    <recommendedName>
        <fullName evidence="1">Cell division inhibitor SulA</fullName>
    </recommendedName>
</protein>
<feature type="chain" id="PRO_0000343965" description="Cell division inhibitor SulA">
    <location>
        <begin position="1"/>
        <end position="169"/>
    </location>
</feature>
<feature type="region of interest" description="FtsZ binding" evidence="1">
    <location>
        <begin position="106"/>
        <end position="112"/>
    </location>
</feature>
<feature type="region of interest" description="Lon protease binding" evidence="1">
    <location>
        <begin position="162"/>
        <end position="169"/>
    </location>
</feature>
<feature type="site" description="Essential for degradation by Lon protease" evidence="1">
    <location>
        <position position="169"/>
    </location>
</feature>